<accession>Q9RYM9</accession>
<gene>
    <name type="ordered locus">DR_A0282</name>
</gene>
<proteinExistence type="evidence at protein level"/>
<organism>
    <name type="scientific">Deinococcus radiodurans (strain ATCC 13939 / DSM 20539 / JCM 16871 / CCUG 27074 / LMG 4051 / NBRC 15346 / NCIMB 9279 / VKM B-1422 / R1)</name>
    <dbReference type="NCBI Taxonomy" id="243230"/>
    <lineage>
        <taxon>Bacteria</taxon>
        <taxon>Thermotogati</taxon>
        <taxon>Deinococcota</taxon>
        <taxon>Deinococci</taxon>
        <taxon>Deinococcales</taxon>
        <taxon>Deinococcaceae</taxon>
        <taxon>Deinococcus</taxon>
    </lineage>
</organism>
<sequence length="504" mass="54835">MFMKSKAAGSEFDGAVAKDNVNTRLKIAQFMSADPNATADVPQLKLETPTAFKANGEVDTWGPLGSGTAFNDVVNVRAYSVKNSDQPRVMRYFLFSLVNIDKDGTWSDVRPAAGLYEQDPGYVTPGVDPNNKGQGQDSGLVSLDATGLEGDVYLQVVGLDFNYNRVAYLVPLKLNRTKAASEVVAPTNVRAIAYTLSTRIDYLYKTQDPVLDAPTSGTNLWVTTSWDAPVTLSGYRGFRVLRSTKAEGPYSQVAFAGEAQCAKPADAKATTRRCTVSDNTASLITDQDYFYKVVAAGTNEATSDVAPTHTLPIFQPKLLSPGKDVHDVDLTPNYTVKLNLFQTGATGAVMNLRVADFITGESYAYAAKRLTVRKELGETQILSNLQGTSNYYVFRDSYATDNDPKTNNDTVTYDAASDVLTVPHQFEVDYLGGNKVPLQANRRYSWYIDSGYAYRLADPSKPTTAANNYIAAYSVYSDPSDTVRVVPGGVKQGGAEVNDFTTRQ</sequence>
<name>Y282_DEIRA</name>
<feature type="propeptide" id="PRO_0000370751" evidence="1">
    <location>
        <begin position="1"/>
        <end position="212"/>
    </location>
</feature>
<feature type="chain" id="PRO_0000370752" description="Uncharacterized protein DR_A0282" evidence="1">
    <location>
        <begin position="213"/>
        <end position="504"/>
    </location>
</feature>
<reference evidence="3" key="1">
    <citation type="journal article" date="1999" name="Science">
        <title>Genome sequence of the radioresistant bacterium Deinococcus radiodurans R1.</title>
        <authorList>
            <person name="White O."/>
            <person name="Eisen J.A."/>
            <person name="Heidelberg J.F."/>
            <person name="Hickey E.K."/>
            <person name="Peterson J.D."/>
            <person name="Dodson R.J."/>
            <person name="Haft D.H."/>
            <person name="Gwinn M.L."/>
            <person name="Nelson W.C."/>
            <person name="Richardson D.L."/>
            <person name="Moffat K.S."/>
            <person name="Qin H."/>
            <person name="Jiang L."/>
            <person name="Pamphile W."/>
            <person name="Crosby M."/>
            <person name="Shen M."/>
            <person name="Vamathevan J.J."/>
            <person name="Lam P."/>
            <person name="McDonald L.A."/>
            <person name="Utterback T.R."/>
            <person name="Zalewski C."/>
            <person name="Makarova K.S."/>
            <person name="Aravind L."/>
            <person name="Daly M.J."/>
            <person name="Minton K.W."/>
            <person name="Fleischmann R.D."/>
            <person name="Ketchum K.A."/>
            <person name="Nelson K.E."/>
            <person name="Salzberg S.L."/>
            <person name="Smith H.O."/>
            <person name="Venter J.C."/>
            <person name="Fraser C.M."/>
        </authorList>
    </citation>
    <scope>NUCLEOTIDE SEQUENCE [LARGE SCALE GENOMIC DNA]</scope>
    <source>
        <strain>ATCC 13939 / DSM 20539 / JCM 16871 / CCUG 27074 / LMG 4051 / NBRC 15346 / NCIMB 9279 / VKM B-1422 / R1</strain>
    </source>
</reference>
<reference evidence="2" key="2">
    <citation type="journal article" date="2004" name="Biochem. Biophys. Res. Commun.">
        <title>Protein recycling is a major component of post-irradiation recovery in Deinococcus radiodurans strain R1.</title>
        <authorList>
            <person name="Joshi B.S."/>
            <person name="Schmid R."/>
            <person name="Altendorf K."/>
            <person name="Apte S.K."/>
        </authorList>
    </citation>
    <scope>PROTEIN SEQUENCE OF 213-227</scope>
    <source>
        <strain>ATCC 13939 / DSM 20539 / JCM 16871 / CCUG 27074 / LMG 4051 / NBRC 15346 / NCIMB 9279 / VKM B-1422 / R1</strain>
    </source>
</reference>
<dbReference type="EMBL" id="AE001825">
    <property type="protein sequence ID" value="AAF12524.1"/>
    <property type="molecule type" value="Genomic_DNA"/>
</dbReference>
<dbReference type="PIR" id="H75581">
    <property type="entry name" value="H75581"/>
</dbReference>
<dbReference type="RefSeq" id="NP_285605.1">
    <property type="nucleotide sequence ID" value="NC_001264.1"/>
</dbReference>
<dbReference type="STRING" id="243230.DR_A0282"/>
<dbReference type="PaxDb" id="243230-DR_A0282"/>
<dbReference type="EnsemblBacteria" id="AAF12524">
    <property type="protein sequence ID" value="AAF12524"/>
    <property type="gene ID" value="DR_A0282"/>
</dbReference>
<dbReference type="KEGG" id="dra:DR_A0282"/>
<dbReference type="PATRIC" id="fig|243230.17.peg.3173"/>
<dbReference type="eggNOG" id="COG4932">
    <property type="taxonomic scope" value="Bacteria"/>
</dbReference>
<dbReference type="HOGENOM" id="CLU_545981_0_0_0"/>
<dbReference type="InParanoid" id="Q9RYM9"/>
<dbReference type="OrthoDB" id="53869at2"/>
<dbReference type="Proteomes" id="UP000002524">
    <property type="component" value="Chromosome 2"/>
</dbReference>
<dbReference type="Gene3D" id="2.60.40.10">
    <property type="entry name" value="Immunoglobulins"/>
    <property type="match status" value="1"/>
</dbReference>
<dbReference type="InterPro" id="IPR013783">
    <property type="entry name" value="Ig-like_fold"/>
</dbReference>
<keyword id="KW-0903">Direct protein sequencing</keyword>
<keyword id="KW-1185">Reference proteome</keyword>
<protein>
    <recommendedName>
        <fullName>Uncharacterized protein DR_A0282</fullName>
    </recommendedName>
</protein>
<evidence type="ECO:0000269" key="1">
    <source>
    </source>
</evidence>
<evidence type="ECO:0000305" key="2"/>
<evidence type="ECO:0000312" key="3">
    <source>
        <dbReference type="EMBL" id="AAF12524.1"/>
    </source>
</evidence>